<accession>Q83KZ1</accession>
<accession>Q7UCE9</accession>
<sequence>MQKLINSVQNYAWGSKTALTELYGMENPSSQPMAELWMGAHPKSSSRVQNAAGDIVSLRDVIESDKSTLLGEAVAKRFGELPFLFKVLCAAQPLSIQVHPNKHNSEIGFAKENAAGIPMDAAERNYKDPNHKPELVFALTPFLAMNAFREFSEIVSLLQPVAGAHPAIAHFLQQPHAERLSELFANLLNMQGEEKSRALAILKSALDSQQGEPWQTIRLISEFYPEDSGLFSPLLLNVVKLNPGEAMFLFAETPHAYLQGVALEVMANSDNVLRAGLTPKYIDIPELVANVKFEAKPANQLLTQPVKQGAELDFPIPVDDFAFSLHDLSDKETTISQQSAAILFCVEGDATLWKGSQQLQLKPGESAFIAANESPVTVKGHGRLARVYNKL</sequence>
<organism>
    <name type="scientific">Shigella flexneri</name>
    <dbReference type="NCBI Taxonomy" id="623"/>
    <lineage>
        <taxon>Bacteria</taxon>
        <taxon>Pseudomonadati</taxon>
        <taxon>Pseudomonadota</taxon>
        <taxon>Gammaproteobacteria</taxon>
        <taxon>Enterobacterales</taxon>
        <taxon>Enterobacteriaceae</taxon>
        <taxon>Shigella</taxon>
    </lineage>
</organism>
<protein>
    <recommendedName>
        <fullName>Mannose-6-phosphate isomerase</fullName>
        <ecNumber>5.3.1.8</ecNumber>
    </recommendedName>
    <alternativeName>
        <fullName>Phosphohexomutase</fullName>
    </alternativeName>
    <alternativeName>
        <fullName>Phosphomannose isomerase</fullName>
        <shortName>PMI</shortName>
    </alternativeName>
</protein>
<comment type="function">
    <text evidence="1">Involved in the conversion of glucose to GDP-L-fucose, which can be converted to L-fucose, a capsular polysaccharide.</text>
</comment>
<comment type="catalytic activity">
    <reaction>
        <text>D-mannose 6-phosphate = D-fructose 6-phosphate</text>
        <dbReference type="Rhea" id="RHEA:12356"/>
        <dbReference type="ChEBI" id="CHEBI:58735"/>
        <dbReference type="ChEBI" id="CHEBI:61527"/>
        <dbReference type="EC" id="5.3.1.8"/>
    </reaction>
</comment>
<comment type="cofactor">
    <cofactor evidence="1">
        <name>Zn(2+)</name>
        <dbReference type="ChEBI" id="CHEBI:29105"/>
    </cofactor>
    <text evidence="1">Binds 1 zinc ion per subunit.</text>
</comment>
<comment type="subcellular location">
    <subcellularLocation>
        <location evidence="2">Cytoplasm</location>
    </subcellularLocation>
</comment>
<comment type="similarity">
    <text evidence="2">Belongs to the mannose-6-phosphate isomerase type 1 family.</text>
</comment>
<evidence type="ECO:0000250" key="1"/>
<evidence type="ECO:0000305" key="2"/>
<keyword id="KW-0007">Acetylation</keyword>
<keyword id="KW-0963">Cytoplasm</keyword>
<keyword id="KW-0413">Isomerase</keyword>
<keyword id="KW-0479">Metal-binding</keyword>
<keyword id="KW-1185">Reference proteome</keyword>
<keyword id="KW-0862">Zinc</keyword>
<proteinExistence type="inferred from homology"/>
<name>MANA_SHIFL</name>
<gene>
    <name type="primary">manA</name>
    <name type="ordered locus">SF1636</name>
    <name type="ordered locus">S1767</name>
</gene>
<dbReference type="EC" id="5.3.1.8"/>
<dbReference type="EMBL" id="AE005674">
    <property type="protein sequence ID" value="AAN43219.2"/>
    <property type="molecule type" value="Genomic_DNA"/>
</dbReference>
<dbReference type="EMBL" id="AE014073">
    <property type="protein sequence ID" value="AAP17106.1"/>
    <property type="molecule type" value="Genomic_DNA"/>
</dbReference>
<dbReference type="RefSeq" id="NP_707512.2">
    <property type="nucleotide sequence ID" value="NC_004337.2"/>
</dbReference>
<dbReference type="RefSeq" id="WP_001170669.1">
    <property type="nucleotide sequence ID" value="NZ_WPGW01000024.1"/>
</dbReference>
<dbReference type="SMR" id="Q83KZ1"/>
<dbReference type="STRING" id="198214.SF1636"/>
<dbReference type="PaxDb" id="198214-SF1636"/>
<dbReference type="GeneID" id="1024799"/>
<dbReference type="KEGG" id="sfl:SF1636"/>
<dbReference type="KEGG" id="sfx:S1767"/>
<dbReference type="PATRIC" id="fig|198214.7.peg.1929"/>
<dbReference type="HOGENOM" id="CLU_026967_1_0_6"/>
<dbReference type="Proteomes" id="UP000001006">
    <property type="component" value="Chromosome"/>
</dbReference>
<dbReference type="Proteomes" id="UP000002673">
    <property type="component" value="Chromosome"/>
</dbReference>
<dbReference type="GO" id="GO:0005829">
    <property type="term" value="C:cytosol"/>
    <property type="evidence" value="ECO:0007669"/>
    <property type="project" value="TreeGrafter"/>
</dbReference>
<dbReference type="GO" id="GO:0004476">
    <property type="term" value="F:mannose-6-phosphate isomerase activity"/>
    <property type="evidence" value="ECO:0007669"/>
    <property type="project" value="UniProtKB-EC"/>
</dbReference>
<dbReference type="GO" id="GO:0008270">
    <property type="term" value="F:zinc ion binding"/>
    <property type="evidence" value="ECO:0007669"/>
    <property type="project" value="InterPro"/>
</dbReference>
<dbReference type="GO" id="GO:0005975">
    <property type="term" value="P:carbohydrate metabolic process"/>
    <property type="evidence" value="ECO:0007669"/>
    <property type="project" value="InterPro"/>
</dbReference>
<dbReference type="GO" id="GO:0009298">
    <property type="term" value="P:GDP-mannose biosynthetic process"/>
    <property type="evidence" value="ECO:0007669"/>
    <property type="project" value="InterPro"/>
</dbReference>
<dbReference type="CDD" id="cd07011">
    <property type="entry name" value="cupin_PMI_type_I_N"/>
    <property type="match status" value="1"/>
</dbReference>
<dbReference type="FunFam" id="2.60.120.10:FF:000076">
    <property type="entry name" value="Mannose-6-phosphate isomerase"/>
    <property type="match status" value="1"/>
</dbReference>
<dbReference type="FunFam" id="2.60.120.10:FF:000030">
    <property type="entry name" value="Mannose-6-phosphate isomerase ManA"/>
    <property type="match status" value="1"/>
</dbReference>
<dbReference type="Gene3D" id="2.60.120.10">
    <property type="entry name" value="Jelly Rolls"/>
    <property type="match status" value="2"/>
</dbReference>
<dbReference type="Gene3D" id="1.10.441.10">
    <property type="entry name" value="Phosphomannose Isomerase, domain 2"/>
    <property type="match status" value="1"/>
</dbReference>
<dbReference type="InterPro" id="IPR001250">
    <property type="entry name" value="Man6P_Isoase-1"/>
</dbReference>
<dbReference type="InterPro" id="IPR016305">
    <property type="entry name" value="Mannose-6-P_Isomerase"/>
</dbReference>
<dbReference type="InterPro" id="IPR049071">
    <property type="entry name" value="MPI_cupin_dom"/>
</dbReference>
<dbReference type="InterPro" id="IPR018050">
    <property type="entry name" value="Pmannose_isomerase-type1_CS"/>
</dbReference>
<dbReference type="InterPro" id="IPR046457">
    <property type="entry name" value="PMI_typeI_cat"/>
</dbReference>
<dbReference type="InterPro" id="IPR046458">
    <property type="entry name" value="PMI_typeI_hel"/>
</dbReference>
<dbReference type="InterPro" id="IPR014710">
    <property type="entry name" value="RmlC-like_jellyroll"/>
</dbReference>
<dbReference type="InterPro" id="IPR011051">
    <property type="entry name" value="RmlC_Cupin_sf"/>
</dbReference>
<dbReference type="NCBIfam" id="TIGR00218">
    <property type="entry name" value="manA"/>
    <property type="match status" value="1"/>
</dbReference>
<dbReference type="NCBIfam" id="NF011710">
    <property type="entry name" value="PRK15131.1"/>
    <property type="match status" value="1"/>
</dbReference>
<dbReference type="PANTHER" id="PTHR10309">
    <property type="entry name" value="MANNOSE-6-PHOSPHATE ISOMERASE"/>
    <property type="match status" value="1"/>
</dbReference>
<dbReference type="PANTHER" id="PTHR10309:SF0">
    <property type="entry name" value="MANNOSE-6-PHOSPHATE ISOMERASE"/>
    <property type="match status" value="1"/>
</dbReference>
<dbReference type="Pfam" id="PF21621">
    <property type="entry name" value="MPI_cupin_dom"/>
    <property type="match status" value="1"/>
</dbReference>
<dbReference type="Pfam" id="PF20511">
    <property type="entry name" value="PMI_typeI_cat"/>
    <property type="match status" value="1"/>
</dbReference>
<dbReference type="Pfam" id="PF20512">
    <property type="entry name" value="PMI_typeI_hel"/>
    <property type="match status" value="1"/>
</dbReference>
<dbReference type="PIRSF" id="PIRSF001480">
    <property type="entry name" value="Mannose-6-phosphate_isomerase"/>
    <property type="match status" value="1"/>
</dbReference>
<dbReference type="PRINTS" id="PR00714">
    <property type="entry name" value="MAN6PISMRASE"/>
</dbReference>
<dbReference type="SUPFAM" id="SSF51182">
    <property type="entry name" value="RmlC-like cupins"/>
    <property type="match status" value="1"/>
</dbReference>
<dbReference type="PROSITE" id="PS00965">
    <property type="entry name" value="PMI_I_1"/>
    <property type="match status" value="1"/>
</dbReference>
<dbReference type="PROSITE" id="PS00966">
    <property type="entry name" value="PMI_I_2"/>
    <property type="match status" value="1"/>
</dbReference>
<feature type="chain" id="PRO_0000194232" description="Mannose-6-phosphate isomerase">
    <location>
        <begin position="1"/>
        <end position="391"/>
    </location>
</feature>
<feature type="active site" evidence="1">
    <location>
        <position position="274"/>
    </location>
</feature>
<feature type="binding site" evidence="1">
    <location>
        <position position="97"/>
    </location>
    <ligand>
        <name>Zn(2+)</name>
        <dbReference type="ChEBI" id="CHEBI:29105"/>
    </ligand>
</feature>
<feature type="binding site" evidence="1">
    <location>
        <position position="99"/>
    </location>
    <ligand>
        <name>Zn(2+)</name>
        <dbReference type="ChEBI" id="CHEBI:29105"/>
    </ligand>
</feature>
<feature type="binding site" evidence="1">
    <location>
        <position position="134"/>
    </location>
    <ligand>
        <name>Zn(2+)</name>
        <dbReference type="ChEBI" id="CHEBI:29105"/>
    </ligand>
</feature>
<feature type="binding site" evidence="1">
    <location>
        <position position="255"/>
    </location>
    <ligand>
        <name>Zn(2+)</name>
        <dbReference type="ChEBI" id="CHEBI:29105"/>
    </ligand>
</feature>
<feature type="modified residue" description="N6-acetyllysine" evidence="1">
    <location>
        <position position="280"/>
    </location>
</feature>
<reference key="1">
    <citation type="journal article" date="2002" name="Nucleic Acids Res.">
        <title>Genome sequence of Shigella flexneri 2a: insights into pathogenicity through comparison with genomes of Escherichia coli K12 and O157.</title>
        <authorList>
            <person name="Jin Q."/>
            <person name="Yuan Z."/>
            <person name="Xu J."/>
            <person name="Wang Y."/>
            <person name="Shen Y."/>
            <person name="Lu W."/>
            <person name="Wang J."/>
            <person name="Liu H."/>
            <person name="Yang J."/>
            <person name="Yang F."/>
            <person name="Zhang X."/>
            <person name="Zhang J."/>
            <person name="Yang G."/>
            <person name="Wu H."/>
            <person name="Qu D."/>
            <person name="Dong J."/>
            <person name="Sun L."/>
            <person name="Xue Y."/>
            <person name="Zhao A."/>
            <person name="Gao Y."/>
            <person name="Zhu J."/>
            <person name="Kan B."/>
            <person name="Ding K."/>
            <person name="Chen S."/>
            <person name="Cheng H."/>
            <person name="Yao Z."/>
            <person name="He B."/>
            <person name="Chen R."/>
            <person name="Ma D."/>
            <person name="Qiang B."/>
            <person name="Wen Y."/>
            <person name="Hou Y."/>
            <person name="Yu J."/>
        </authorList>
    </citation>
    <scope>NUCLEOTIDE SEQUENCE [LARGE SCALE GENOMIC DNA]</scope>
    <source>
        <strain>301 / Serotype 2a</strain>
    </source>
</reference>
<reference key="2">
    <citation type="journal article" date="2003" name="Infect. Immun.">
        <title>Complete genome sequence and comparative genomics of Shigella flexneri serotype 2a strain 2457T.</title>
        <authorList>
            <person name="Wei J."/>
            <person name="Goldberg M.B."/>
            <person name="Burland V."/>
            <person name="Venkatesan M.M."/>
            <person name="Deng W."/>
            <person name="Fournier G."/>
            <person name="Mayhew G.F."/>
            <person name="Plunkett G. III"/>
            <person name="Rose D.J."/>
            <person name="Darling A."/>
            <person name="Mau B."/>
            <person name="Perna N.T."/>
            <person name="Payne S.M."/>
            <person name="Runyen-Janecky L.J."/>
            <person name="Zhou S."/>
            <person name="Schwartz D.C."/>
            <person name="Blattner F.R."/>
        </authorList>
    </citation>
    <scope>NUCLEOTIDE SEQUENCE [LARGE SCALE GENOMIC DNA]</scope>
    <source>
        <strain>ATCC 700930 / 2457T / Serotype 2a</strain>
    </source>
</reference>